<dbReference type="EC" id="2.4.2.7" evidence="1"/>
<dbReference type="EMBL" id="CP000395">
    <property type="protein sequence ID" value="ABH02051.1"/>
    <property type="molecule type" value="Genomic_DNA"/>
</dbReference>
<dbReference type="EMBL" id="CP002933">
    <property type="protein sequence ID" value="AEL69993.1"/>
    <property type="molecule type" value="Genomic_DNA"/>
</dbReference>
<dbReference type="RefSeq" id="WP_011601221.1">
    <property type="nucleotide sequence ID" value="NC_008277.1"/>
</dbReference>
<dbReference type="SMR" id="Q0SM77"/>
<dbReference type="STRING" id="29518.BLA32_00340"/>
<dbReference type="KEGG" id="baf:BAPKO_0826"/>
<dbReference type="KEGG" id="bafz:BafPKo_0803"/>
<dbReference type="PATRIC" id="fig|390236.22.peg.766"/>
<dbReference type="eggNOG" id="COG0503">
    <property type="taxonomic scope" value="Bacteria"/>
</dbReference>
<dbReference type="HOGENOM" id="CLU_063339_3_0_12"/>
<dbReference type="OrthoDB" id="9803963at2"/>
<dbReference type="UniPathway" id="UPA00588">
    <property type="reaction ID" value="UER00646"/>
</dbReference>
<dbReference type="Proteomes" id="UP000005216">
    <property type="component" value="Chromosome"/>
</dbReference>
<dbReference type="GO" id="GO:0005737">
    <property type="term" value="C:cytoplasm"/>
    <property type="evidence" value="ECO:0007669"/>
    <property type="project" value="UniProtKB-SubCell"/>
</dbReference>
<dbReference type="GO" id="GO:0003999">
    <property type="term" value="F:adenine phosphoribosyltransferase activity"/>
    <property type="evidence" value="ECO:0007669"/>
    <property type="project" value="UniProtKB-UniRule"/>
</dbReference>
<dbReference type="GO" id="GO:0006168">
    <property type="term" value="P:adenine salvage"/>
    <property type="evidence" value="ECO:0007669"/>
    <property type="project" value="InterPro"/>
</dbReference>
<dbReference type="GO" id="GO:0044209">
    <property type="term" value="P:AMP salvage"/>
    <property type="evidence" value="ECO:0007669"/>
    <property type="project" value="UniProtKB-UniRule"/>
</dbReference>
<dbReference type="GO" id="GO:0006166">
    <property type="term" value="P:purine ribonucleoside salvage"/>
    <property type="evidence" value="ECO:0007669"/>
    <property type="project" value="UniProtKB-KW"/>
</dbReference>
<dbReference type="CDD" id="cd06223">
    <property type="entry name" value="PRTases_typeI"/>
    <property type="match status" value="1"/>
</dbReference>
<dbReference type="FunFam" id="3.40.50.2020:FF:000004">
    <property type="entry name" value="Adenine phosphoribosyltransferase"/>
    <property type="match status" value="1"/>
</dbReference>
<dbReference type="Gene3D" id="3.40.50.2020">
    <property type="match status" value="1"/>
</dbReference>
<dbReference type="HAMAP" id="MF_00004">
    <property type="entry name" value="Aden_phosphoribosyltr"/>
    <property type="match status" value="1"/>
</dbReference>
<dbReference type="InterPro" id="IPR005764">
    <property type="entry name" value="Ade_phspho_trans"/>
</dbReference>
<dbReference type="InterPro" id="IPR050120">
    <property type="entry name" value="Adenine_PRTase"/>
</dbReference>
<dbReference type="InterPro" id="IPR000836">
    <property type="entry name" value="PRibTrfase_dom"/>
</dbReference>
<dbReference type="InterPro" id="IPR029057">
    <property type="entry name" value="PRTase-like"/>
</dbReference>
<dbReference type="NCBIfam" id="NF002636">
    <property type="entry name" value="PRK02304.1-5"/>
    <property type="match status" value="1"/>
</dbReference>
<dbReference type="PANTHER" id="PTHR11776">
    <property type="entry name" value="ADENINE PHOSPHORIBOSYLTRANSFERASE"/>
    <property type="match status" value="1"/>
</dbReference>
<dbReference type="PANTHER" id="PTHR11776:SF7">
    <property type="entry name" value="PHOSPHORIBOSYLTRANSFERASE DOMAIN-CONTAINING PROTEIN"/>
    <property type="match status" value="1"/>
</dbReference>
<dbReference type="Pfam" id="PF00156">
    <property type="entry name" value="Pribosyltran"/>
    <property type="match status" value="1"/>
</dbReference>
<dbReference type="SUPFAM" id="SSF53271">
    <property type="entry name" value="PRTase-like"/>
    <property type="match status" value="1"/>
</dbReference>
<dbReference type="PROSITE" id="PS00103">
    <property type="entry name" value="PUR_PYR_PR_TRANSFER"/>
    <property type="match status" value="1"/>
</dbReference>
<protein>
    <recommendedName>
        <fullName evidence="1">Adenine phosphoribosyltransferase</fullName>
        <shortName evidence="1">APRT</shortName>
        <ecNumber evidence="1">2.4.2.7</ecNumber>
    </recommendedName>
</protein>
<evidence type="ECO:0000255" key="1">
    <source>
        <dbReference type="HAMAP-Rule" id="MF_00004"/>
    </source>
</evidence>
<name>APT_BORAP</name>
<sequence length="176" mass="20175">MKNKTEYYDQFIAKVPNFPKKGILFYDITSVLLKPEVYTSLINEVYSFYNLKKIDCIAVVESRGYLIGAPLSLKMQLPLVLIRKEGKLPREVFGEEYELEYGFGRIEVHKDDVRMYSNILLIDDILATGGTLKSSAILLERAGGRVKNIFCFIELCGINGRRILEGYKVNSLVRYD</sequence>
<reference key="1">
    <citation type="journal article" date="2006" name="BMC Genomics">
        <title>Comparative genome analysis: selection pressure on the Borrelia vls cassettes is essential for infectivity.</title>
        <authorList>
            <person name="Gloeckner G."/>
            <person name="Schulte-Spechtel U."/>
            <person name="Schilhabel M."/>
            <person name="Felder M."/>
            <person name="Suehnel J."/>
            <person name="Wilske B."/>
            <person name="Platzer M."/>
        </authorList>
    </citation>
    <scope>NUCLEOTIDE SEQUENCE [LARGE SCALE GENOMIC DNA]</scope>
    <source>
        <strain>PKo</strain>
    </source>
</reference>
<reference key="2">
    <citation type="journal article" date="2011" name="J. Bacteriol.">
        <title>Whole-genome sequences of two Borrelia afzelii and two Borrelia garinii Lyme disease agent isolates.</title>
        <authorList>
            <person name="Casjens S.R."/>
            <person name="Mongodin E.F."/>
            <person name="Qiu W.G."/>
            <person name="Dunn J.J."/>
            <person name="Luft B.J."/>
            <person name="Fraser-Liggett C.M."/>
            <person name="Schutzer S.E."/>
        </authorList>
    </citation>
    <scope>NUCLEOTIDE SEQUENCE [LARGE SCALE GENOMIC DNA]</scope>
    <source>
        <strain>PKo</strain>
    </source>
</reference>
<proteinExistence type="inferred from homology"/>
<gene>
    <name evidence="1" type="primary">apt</name>
    <name type="ordered locus">BAPKO_0826</name>
    <name type="ordered locus">BafPKo_0803</name>
</gene>
<comment type="function">
    <text evidence="1">Catalyzes a salvage reaction resulting in the formation of AMP, that is energically less costly than de novo synthesis.</text>
</comment>
<comment type="catalytic activity">
    <reaction evidence="1">
        <text>AMP + diphosphate = 5-phospho-alpha-D-ribose 1-diphosphate + adenine</text>
        <dbReference type="Rhea" id="RHEA:16609"/>
        <dbReference type="ChEBI" id="CHEBI:16708"/>
        <dbReference type="ChEBI" id="CHEBI:33019"/>
        <dbReference type="ChEBI" id="CHEBI:58017"/>
        <dbReference type="ChEBI" id="CHEBI:456215"/>
        <dbReference type="EC" id="2.4.2.7"/>
    </reaction>
</comment>
<comment type="pathway">
    <text evidence="1">Purine metabolism; AMP biosynthesis via salvage pathway; AMP from adenine: step 1/1.</text>
</comment>
<comment type="subunit">
    <text evidence="1">Homodimer.</text>
</comment>
<comment type="subcellular location">
    <subcellularLocation>
        <location evidence="1">Cytoplasm</location>
    </subcellularLocation>
</comment>
<comment type="similarity">
    <text evidence="1">Belongs to the purine/pyrimidine phosphoribosyltransferase family.</text>
</comment>
<accession>Q0SM77</accession>
<accession>G0IRV8</accession>
<keyword id="KW-0963">Cytoplasm</keyword>
<keyword id="KW-0328">Glycosyltransferase</keyword>
<keyword id="KW-0660">Purine salvage</keyword>
<keyword id="KW-0808">Transferase</keyword>
<feature type="chain" id="PRO_1000000260" description="Adenine phosphoribosyltransferase">
    <location>
        <begin position="1"/>
        <end position="176"/>
    </location>
</feature>
<organism>
    <name type="scientific">Borreliella afzelii (strain PKo)</name>
    <name type="common">Borrelia afzelii</name>
    <dbReference type="NCBI Taxonomy" id="390236"/>
    <lineage>
        <taxon>Bacteria</taxon>
        <taxon>Pseudomonadati</taxon>
        <taxon>Spirochaetota</taxon>
        <taxon>Spirochaetia</taxon>
        <taxon>Spirochaetales</taxon>
        <taxon>Borreliaceae</taxon>
        <taxon>Borreliella</taxon>
    </lineage>
</organism>